<comment type="similarity">
    <text evidence="1">Belongs to the UPF0102 family.</text>
</comment>
<feature type="chain" id="PRO_0000336207" description="UPF0102 protein Mjls_1965">
    <location>
        <begin position="1"/>
        <end position="135"/>
    </location>
</feature>
<evidence type="ECO:0000255" key="1">
    <source>
        <dbReference type="HAMAP-Rule" id="MF_00048"/>
    </source>
</evidence>
<sequence length="135" mass="14993">MPSVSVWVRSLAPMTTWTRAAIGALGEDLAVKHLDSLGMRVLERNWRCRYGELDVIAEDPAARAVVFVEVKTRTTDHFGGVVQAVTPQKVRRLRRLAGLWLAGRDERWAAVRIDVIGVRIGRQATPEITHLTGVA</sequence>
<proteinExistence type="inferred from homology"/>
<gene>
    <name type="ordered locus">Mjls_1965</name>
</gene>
<reference key="1">
    <citation type="submission" date="2007-02" db="EMBL/GenBank/DDBJ databases">
        <title>Complete sequence of Mycobacterium sp. JLS.</title>
        <authorList>
            <consortium name="US DOE Joint Genome Institute"/>
            <person name="Copeland A."/>
            <person name="Lucas S."/>
            <person name="Lapidus A."/>
            <person name="Barry K."/>
            <person name="Detter J.C."/>
            <person name="Glavina del Rio T."/>
            <person name="Hammon N."/>
            <person name="Israni S."/>
            <person name="Dalin E."/>
            <person name="Tice H."/>
            <person name="Pitluck S."/>
            <person name="Chain P."/>
            <person name="Malfatti S."/>
            <person name="Shin M."/>
            <person name="Vergez L."/>
            <person name="Schmutz J."/>
            <person name="Larimer F."/>
            <person name="Land M."/>
            <person name="Hauser L."/>
            <person name="Kyrpides N."/>
            <person name="Mikhailova N."/>
            <person name="Miller C.D."/>
            <person name="Anderson A.J."/>
            <person name="Sims R.C."/>
            <person name="Richardson P."/>
        </authorList>
    </citation>
    <scope>NUCLEOTIDE SEQUENCE [LARGE SCALE GENOMIC DNA]</scope>
    <source>
        <strain>JLS</strain>
    </source>
</reference>
<name>Y1965_MYCSJ</name>
<dbReference type="EMBL" id="CP000580">
    <property type="protein sequence ID" value="ABN97753.1"/>
    <property type="molecule type" value="Genomic_DNA"/>
</dbReference>
<dbReference type="SMR" id="A3PXX6"/>
<dbReference type="KEGG" id="mjl:Mjls_1965"/>
<dbReference type="HOGENOM" id="CLU_115353_2_3_11"/>
<dbReference type="BioCyc" id="MSP164757:G1G8C-1985-MONOMER"/>
<dbReference type="GO" id="GO:0003676">
    <property type="term" value="F:nucleic acid binding"/>
    <property type="evidence" value="ECO:0007669"/>
    <property type="project" value="InterPro"/>
</dbReference>
<dbReference type="CDD" id="cd20736">
    <property type="entry name" value="PoNe_Nuclease"/>
    <property type="match status" value="1"/>
</dbReference>
<dbReference type="Gene3D" id="3.40.1350.10">
    <property type="match status" value="1"/>
</dbReference>
<dbReference type="HAMAP" id="MF_00048">
    <property type="entry name" value="UPF0102"/>
    <property type="match status" value="1"/>
</dbReference>
<dbReference type="InterPro" id="IPR011335">
    <property type="entry name" value="Restrct_endonuc-II-like"/>
</dbReference>
<dbReference type="InterPro" id="IPR011856">
    <property type="entry name" value="tRNA_endonuc-like_dom_sf"/>
</dbReference>
<dbReference type="InterPro" id="IPR003509">
    <property type="entry name" value="UPF0102_YraN-like"/>
</dbReference>
<dbReference type="NCBIfam" id="NF009150">
    <property type="entry name" value="PRK12497.1-3"/>
    <property type="match status" value="1"/>
</dbReference>
<dbReference type="NCBIfam" id="NF009153">
    <property type="entry name" value="PRK12497.3-1"/>
    <property type="match status" value="1"/>
</dbReference>
<dbReference type="NCBIfam" id="NF009154">
    <property type="entry name" value="PRK12497.3-3"/>
    <property type="match status" value="1"/>
</dbReference>
<dbReference type="PANTHER" id="PTHR34039">
    <property type="entry name" value="UPF0102 PROTEIN YRAN"/>
    <property type="match status" value="1"/>
</dbReference>
<dbReference type="PANTHER" id="PTHR34039:SF1">
    <property type="entry name" value="UPF0102 PROTEIN YRAN"/>
    <property type="match status" value="1"/>
</dbReference>
<dbReference type="Pfam" id="PF02021">
    <property type="entry name" value="UPF0102"/>
    <property type="match status" value="1"/>
</dbReference>
<dbReference type="SUPFAM" id="SSF52980">
    <property type="entry name" value="Restriction endonuclease-like"/>
    <property type="match status" value="1"/>
</dbReference>
<protein>
    <recommendedName>
        <fullName evidence="1">UPF0102 protein Mjls_1965</fullName>
    </recommendedName>
</protein>
<accession>A3PXX6</accession>
<organism>
    <name type="scientific">Mycobacterium sp. (strain JLS)</name>
    <dbReference type="NCBI Taxonomy" id="164757"/>
    <lineage>
        <taxon>Bacteria</taxon>
        <taxon>Bacillati</taxon>
        <taxon>Actinomycetota</taxon>
        <taxon>Actinomycetes</taxon>
        <taxon>Mycobacteriales</taxon>
        <taxon>Mycobacteriaceae</taxon>
        <taxon>Mycobacterium</taxon>
    </lineage>
</organism>